<organism>
    <name type="scientific">Saccharomyces cerevisiae (strain ATCC 204508 / S288c)</name>
    <name type="common">Baker's yeast</name>
    <dbReference type="NCBI Taxonomy" id="559292"/>
    <lineage>
        <taxon>Eukaryota</taxon>
        <taxon>Fungi</taxon>
        <taxon>Dikarya</taxon>
        <taxon>Ascomycota</taxon>
        <taxon>Saccharomycotina</taxon>
        <taxon>Saccharomycetes</taxon>
        <taxon>Saccharomycetales</taxon>
        <taxon>Saccharomycetaceae</taxon>
        <taxon>Saccharomyces</taxon>
    </lineage>
</organism>
<accession>P32561</accession>
<accession>D6W0L7</accession>
<dbReference type="EC" id="3.5.1.98" evidence="9"/>
<dbReference type="EMBL" id="S66438">
    <property type="protein sequence ID" value="AAB20328.1"/>
    <property type="molecule type" value="Genomic_DNA"/>
</dbReference>
<dbReference type="EMBL" id="X83226">
    <property type="protein sequence ID" value="CAA58228.1"/>
    <property type="molecule type" value="Genomic_DNA"/>
</dbReference>
<dbReference type="EMBL" id="Z46259">
    <property type="protein sequence ID" value="CAA86368.1"/>
    <property type="molecule type" value="Genomic_DNA"/>
</dbReference>
<dbReference type="EMBL" id="Z71605">
    <property type="protein sequence ID" value="CAA96262.1"/>
    <property type="molecule type" value="Genomic_DNA"/>
</dbReference>
<dbReference type="EMBL" id="Z71606">
    <property type="protein sequence ID" value="CAA96263.1"/>
    <property type="molecule type" value="Genomic_DNA"/>
</dbReference>
<dbReference type="EMBL" id="AY692813">
    <property type="protein sequence ID" value="AAT92832.1"/>
    <property type="molecule type" value="Genomic_DNA"/>
</dbReference>
<dbReference type="EMBL" id="BK006947">
    <property type="protein sequence ID" value="DAA10233.1"/>
    <property type="molecule type" value="Genomic_DNA"/>
</dbReference>
<dbReference type="PIR" id="S22284">
    <property type="entry name" value="S22284"/>
</dbReference>
<dbReference type="RefSeq" id="NP_014069.1">
    <property type="nucleotide sequence ID" value="NM_001183168.1"/>
</dbReference>
<dbReference type="PDB" id="7YI0">
    <property type="method" value="EM"/>
    <property type="resolution" value="3.20 A"/>
    <property type="chains" value="B=1-433"/>
</dbReference>
<dbReference type="PDB" id="7YI2">
    <property type="method" value="EM"/>
    <property type="resolution" value="3.40 A"/>
    <property type="chains" value="B=1-433"/>
</dbReference>
<dbReference type="PDB" id="7YI3">
    <property type="method" value="EM"/>
    <property type="resolution" value="3.30 A"/>
    <property type="chains" value="B=1-433"/>
</dbReference>
<dbReference type="PDB" id="7YI4">
    <property type="method" value="EM"/>
    <property type="resolution" value="3.96 A"/>
    <property type="chains" value="B=1-433"/>
</dbReference>
<dbReference type="PDB" id="7YI5">
    <property type="method" value="EM"/>
    <property type="resolution" value="3.96 A"/>
    <property type="chains" value="B=1-433"/>
</dbReference>
<dbReference type="PDB" id="8GA8">
    <property type="method" value="EM"/>
    <property type="resolution" value="3.50 A"/>
    <property type="chains" value="B/E=1-433"/>
</dbReference>
<dbReference type="PDB" id="8HPO">
    <property type="method" value="EM"/>
    <property type="resolution" value="2.60 A"/>
    <property type="chains" value="F/G=1-433"/>
</dbReference>
<dbReference type="PDB" id="8HXX">
    <property type="method" value="EM"/>
    <property type="resolution" value="3.00 A"/>
    <property type="chains" value="L=1-433"/>
</dbReference>
<dbReference type="PDB" id="8HXY">
    <property type="method" value="EM"/>
    <property type="resolution" value="3.10 A"/>
    <property type="chains" value="L=1-433"/>
</dbReference>
<dbReference type="PDB" id="8HY0">
    <property type="method" value="EM"/>
    <property type="resolution" value="3.10 A"/>
    <property type="chains" value="L=1-433"/>
</dbReference>
<dbReference type="PDB" id="8IHN">
    <property type="method" value="EM"/>
    <property type="resolution" value="3.37 A"/>
    <property type="chains" value="L=1-433"/>
</dbReference>
<dbReference type="PDB" id="8IHT">
    <property type="method" value="EM"/>
    <property type="resolution" value="3.72 A"/>
    <property type="chains" value="L=1-433"/>
</dbReference>
<dbReference type="PDB" id="8JHO">
    <property type="method" value="EM"/>
    <property type="resolution" value="7.60 A"/>
    <property type="chains" value="L=1-433"/>
</dbReference>
<dbReference type="PDB" id="8KC7">
    <property type="method" value="EM"/>
    <property type="resolution" value="3.46 A"/>
    <property type="chains" value="A=1-433"/>
</dbReference>
<dbReference type="PDB" id="8KD2">
    <property type="method" value="EM"/>
    <property type="resolution" value="3.02 A"/>
    <property type="chains" value="A=1-433"/>
</dbReference>
<dbReference type="PDB" id="8KD3">
    <property type="method" value="EM"/>
    <property type="resolution" value="2.90 A"/>
    <property type="chains" value="A=1-433"/>
</dbReference>
<dbReference type="PDB" id="8KD4">
    <property type="method" value="EM"/>
    <property type="resolution" value="2.93 A"/>
    <property type="chains" value="A=1-433"/>
</dbReference>
<dbReference type="PDB" id="8KD5">
    <property type="method" value="EM"/>
    <property type="resolution" value="2.90 A"/>
    <property type="chains" value="A=1-433"/>
</dbReference>
<dbReference type="PDB" id="8KD6">
    <property type="method" value="EM"/>
    <property type="resolution" value="3.07 A"/>
    <property type="chains" value="A=1-433"/>
</dbReference>
<dbReference type="PDB" id="8KD7">
    <property type="method" value="EM"/>
    <property type="resolution" value="3.09 A"/>
    <property type="chains" value="A=1-433"/>
</dbReference>
<dbReference type="PDB" id="8TOF">
    <property type="method" value="EM"/>
    <property type="resolution" value="2.80 A"/>
    <property type="chains" value="B=1-433"/>
</dbReference>
<dbReference type="PDB" id="8W9C">
    <property type="method" value="EM"/>
    <property type="resolution" value="3.30 A"/>
    <property type="chains" value="B=1-433"/>
</dbReference>
<dbReference type="PDB" id="8W9D">
    <property type="method" value="EM"/>
    <property type="resolution" value="3.90 A"/>
    <property type="chains" value="B=1-433"/>
</dbReference>
<dbReference type="PDB" id="8W9E">
    <property type="method" value="EM"/>
    <property type="resolution" value="3.60 A"/>
    <property type="chains" value="B=1-433"/>
</dbReference>
<dbReference type="PDB" id="8W9F">
    <property type="method" value="EM"/>
    <property type="resolution" value="4.40 A"/>
    <property type="chains" value="B=1-433"/>
</dbReference>
<dbReference type="PDBsum" id="7YI0"/>
<dbReference type="PDBsum" id="7YI2"/>
<dbReference type="PDBsum" id="7YI3"/>
<dbReference type="PDBsum" id="7YI4"/>
<dbReference type="PDBsum" id="7YI5"/>
<dbReference type="PDBsum" id="8GA8"/>
<dbReference type="PDBsum" id="8HPO"/>
<dbReference type="PDBsum" id="8HXX"/>
<dbReference type="PDBsum" id="8HXY"/>
<dbReference type="PDBsum" id="8HY0"/>
<dbReference type="PDBsum" id="8IHN"/>
<dbReference type="PDBsum" id="8IHT"/>
<dbReference type="PDBsum" id="8JHO"/>
<dbReference type="PDBsum" id="8KC7"/>
<dbReference type="PDBsum" id="8KD2"/>
<dbReference type="PDBsum" id="8KD3"/>
<dbReference type="PDBsum" id="8KD4"/>
<dbReference type="PDBsum" id="8KD5"/>
<dbReference type="PDBsum" id="8KD6"/>
<dbReference type="PDBsum" id="8KD7"/>
<dbReference type="PDBsum" id="8TOF"/>
<dbReference type="PDBsum" id="8W9C"/>
<dbReference type="PDBsum" id="8W9D"/>
<dbReference type="PDBsum" id="8W9E"/>
<dbReference type="PDBsum" id="8W9F"/>
<dbReference type="EMDB" id="EMD-29892"/>
<dbReference type="EMDB" id="EMD-33845"/>
<dbReference type="EMDB" id="EMD-33849"/>
<dbReference type="EMDB" id="EMD-33850"/>
<dbReference type="EMDB" id="EMD-33851"/>
<dbReference type="EMDB" id="EMD-33852"/>
<dbReference type="EMDB" id="EMD-34935"/>
<dbReference type="EMDB" id="EMD-35081"/>
<dbReference type="EMDB" id="EMD-35082"/>
<dbReference type="EMDB" id="EMD-35084"/>
<dbReference type="EMDB" id="EMD-35450"/>
<dbReference type="EMDB" id="EMD-35455"/>
<dbReference type="EMDB" id="EMD-36283"/>
<dbReference type="EMDB" id="EMD-37096"/>
<dbReference type="EMDB" id="EMD-37122"/>
<dbReference type="EMDB" id="EMD-37123"/>
<dbReference type="EMDB" id="EMD-37124"/>
<dbReference type="EMDB" id="EMD-37125"/>
<dbReference type="EMDB" id="EMD-37126"/>
<dbReference type="EMDB" id="EMD-37127"/>
<dbReference type="EMDB" id="EMD-37364"/>
<dbReference type="EMDB" id="EMD-37365"/>
<dbReference type="EMDB" id="EMD-37366"/>
<dbReference type="EMDB" id="EMD-37367"/>
<dbReference type="EMDB" id="EMD-41449"/>
<dbReference type="SMR" id="P32561"/>
<dbReference type="BioGRID" id="35511">
    <property type="interactions" value="1062"/>
</dbReference>
<dbReference type="ComplexPortal" id="CPX-1372">
    <property type="entry name" value="SNT2C histone deacetylase complex"/>
</dbReference>
<dbReference type="ComplexPortal" id="CPX-1851">
    <property type="entry name" value="RPD3S histone deacetylase complex"/>
</dbReference>
<dbReference type="ComplexPortal" id="CPX-1852">
    <property type="entry name" value="RPD3L histone deacetylase complex"/>
</dbReference>
<dbReference type="DIP" id="DIP-681N"/>
<dbReference type="FunCoup" id="P32561">
    <property type="interactions" value="1301"/>
</dbReference>
<dbReference type="IntAct" id="P32561">
    <property type="interactions" value="80"/>
</dbReference>
<dbReference type="MINT" id="P32561"/>
<dbReference type="STRING" id="4932.YNL330C"/>
<dbReference type="iPTMnet" id="P32561"/>
<dbReference type="PaxDb" id="4932-YNL330C"/>
<dbReference type="PeptideAtlas" id="P32561"/>
<dbReference type="EnsemblFungi" id="YNL330C_mRNA">
    <property type="protein sequence ID" value="YNL330C"/>
    <property type="gene ID" value="YNL330C"/>
</dbReference>
<dbReference type="GeneID" id="855386"/>
<dbReference type="KEGG" id="sce:YNL330C"/>
<dbReference type="AGR" id="SGD:S000005274"/>
<dbReference type="SGD" id="S000005274">
    <property type="gene designation" value="RPD3"/>
</dbReference>
<dbReference type="VEuPathDB" id="FungiDB:YNL330C"/>
<dbReference type="eggNOG" id="KOG1342">
    <property type="taxonomic scope" value="Eukaryota"/>
</dbReference>
<dbReference type="GeneTree" id="ENSGT00940000165542"/>
<dbReference type="HOGENOM" id="CLU_007727_7_4_1"/>
<dbReference type="InParanoid" id="P32561"/>
<dbReference type="OMA" id="GKIMEWY"/>
<dbReference type="OrthoDB" id="1918432at2759"/>
<dbReference type="BioCyc" id="YEAST:G3O-33314-MONOMER"/>
<dbReference type="BRENDA" id="3.5.1.98">
    <property type="organism ID" value="984"/>
</dbReference>
<dbReference type="Reactome" id="R-SCE-3214815">
    <property type="pathway name" value="HDACs deacetylate histones"/>
</dbReference>
<dbReference type="Reactome" id="R-SCE-4551638">
    <property type="pathway name" value="SUMOylation of chromatin organization proteins"/>
</dbReference>
<dbReference type="Reactome" id="R-SCE-9018519">
    <property type="pathway name" value="Estrogen-dependent gene expression"/>
</dbReference>
<dbReference type="BioGRID-ORCS" id="855386">
    <property type="hits" value="0 hits in 10 CRISPR screens"/>
</dbReference>
<dbReference type="PRO" id="PR:P32561"/>
<dbReference type="Proteomes" id="UP000002311">
    <property type="component" value="Chromosome XIV"/>
</dbReference>
<dbReference type="RNAct" id="P32561">
    <property type="molecule type" value="protein"/>
</dbReference>
<dbReference type="GO" id="GO:0005737">
    <property type="term" value="C:cytoplasm"/>
    <property type="evidence" value="ECO:0007669"/>
    <property type="project" value="UniProtKB-SubCell"/>
</dbReference>
<dbReference type="GO" id="GO:0000118">
    <property type="term" value="C:histone deacetylase complex"/>
    <property type="evidence" value="ECO:0000314"/>
    <property type="project" value="SGD"/>
</dbReference>
<dbReference type="GO" id="GO:0034399">
    <property type="term" value="C:nuclear periphery"/>
    <property type="evidence" value="ECO:0000314"/>
    <property type="project" value="SGD"/>
</dbReference>
<dbReference type="GO" id="GO:0005634">
    <property type="term" value="C:nucleus"/>
    <property type="evidence" value="ECO:0000303"/>
    <property type="project" value="ComplexPortal"/>
</dbReference>
<dbReference type="GO" id="GO:0033698">
    <property type="term" value="C:Rpd3L complex"/>
    <property type="evidence" value="ECO:0000314"/>
    <property type="project" value="SGD"/>
</dbReference>
<dbReference type="GO" id="GO:0070210">
    <property type="term" value="C:Rpd3L-Expanded complex"/>
    <property type="evidence" value="ECO:0007005"/>
    <property type="project" value="SGD"/>
</dbReference>
<dbReference type="GO" id="GO:0032221">
    <property type="term" value="C:Rpd3S complex"/>
    <property type="evidence" value="ECO:0000314"/>
    <property type="project" value="SGD"/>
</dbReference>
<dbReference type="GO" id="GO:0070822">
    <property type="term" value="C:Sin3-type complex"/>
    <property type="evidence" value="ECO:0000314"/>
    <property type="project" value="SGD"/>
</dbReference>
<dbReference type="GO" id="GO:0070211">
    <property type="term" value="C:Snt2C complex"/>
    <property type="evidence" value="ECO:0000353"/>
    <property type="project" value="ComplexPortal"/>
</dbReference>
<dbReference type="GO" id="GO:0004407">
    <property type="term" value="F:histone deacetylase activity"/>
    <property type="evidence" value="ECO:0000314"/>
    <property type="project" value="SGD"/>
</dbReference>
<dbReference type="GO" id="GO:0141221">
    <property type="term" value="F:histone deacetylase activity, hydrolytic mechanism"/>
    <property type="evidence" value="ECO:0007669"/>
    <property type="project" value="UniProtKB-EC"/>
</dbReference>
<dbReference type="GO" id="GO:0003713">
    <property type="term" value="F:transcription coactivator activity"/>
    <property type="evidence" value="ECO:0000315"/>
    <property type="project" value="SGD"/>
</dbReference>
<dbReference type="GO" id="GO:0003714">
    <property type="term" value="F:transcription corepressor activity"/>
    <property type="evidence" value="ECO:0000315"/>
    <property type="project" value="SGD"/>
</dbReference>
<dbReference type="GO" id="GO:0034605">
    <property type="term" value="P:cellular response to heat"/>
    <property type="evidence" value="ECO:0000315"/>
    <property type="project" value="SGD"/>
</dbReference>
<dbReference type="GO" id="GO:0006995">
    <property type="term" value="P:cellular response to nitrogen starvation"/>
    <property type="evidence" value="ECO:0000315"/>
    <property type="project" value="SGD"/>
</dbReference>
<dbReference type="GO" id="GO:0000082">
    <property type="term" value="P:G1/S transition of mitotic cell cycle"/>
    <property type="evidence" value="ECO:0000316"/>
    <property type="project" value="SGD"/>
</dbReference>
<dbReference type="GO" id="GO:0000086">
    <property type="term" value="P:G2/M transition of mitotic cell cycle"/>
    <property type="evidence" value="ECO:0000316"/>
    <property type="project" value="SGD"/>
</dbReference>
<dbReference type="GO" id="GO:0031507">
    <property type="term" value="P:heterochromatin formation"/>
    <property type="evidence" value="ECO:0000318"/>
    <property type="project" value="GO_Central"/>
</dbReference>
<dbReference type="GO" id="GO:0051321">
    <property type="term" value="P:meiotic cell cycle"/>
    <property type="evidence" value="ECO:0000315"/>
    <property type="project" value="SGD"/>
</dbReference>
<dbReference type="GO" id="GO:0061188">
    <property type="term" value="P:negative regulation of rDNA heterochromatin formation"/>
    <property type="evidence" value="ECO:0000315"/>
    <property type="project" value="SGD"/>
</dbReference>
<dbReference type="GO" id="GO:0045128">
    <property type="term" value="P:negative regulation of reciprocal meiotic recombination"/>
    <property type="evidence" value="ECO:0000315"/>
    <property type="project" value="SGD"/>
</dbReference>
<dbReference type="GO" id="GO:0061186">
    <property type="term" value="P:negative regulation of silent mating-type cassette heterochromatin formation"/>
    <property type="evidence" value="ECO:0000315"/>
    <property type="project" value="SGD"/>
</dbReference>
<dbReference type="GO" id="GO:0016479">
    <property type="term" value="P:negative regulation of transcription by RNA polymerase I"/>
    <property type="evidence" value="ECO:0000315"/>
    <property type="project" value="SGD"/>
</dbReference>
<dbReference type="GO" id="GO:0000122">
    <property type="term" value="P:negative regulation of transcription by RNA polymerase II"/>
    <property type="evidence" value="ECO:0000315"/>
    <property type="project" value="SGD"/>
</dbReference>
<dbReference type="GO" id="GO:0044804">
    <property type="term" value="P:nucleophagy"/>
    <property type="evidence" value="ECO:0000315"/>
    <property type="project" value="SGD"/>
</dbReference>
<dbReference type="GO" id="GO:0006334">
    <property type="term" value="P:nucleosome assembly"/>
    <property type="evidence" value="ECO:0000303"/>
    <property type="project" value="ComplexPortal"/>
</dbReference>
<dbReference type="GO" id="GO:0016239">
    <property type="term" value="P:positive regulation of macroautophagy"/>
    <property type="evidence" value="ECO:0000315"/>
    <property type="project" value="SGD"/>
</dbReference>
<dbReference type="GO" id="GO:0045944">
    <property type="term" value="P:positive regulation of transcription by RNA polymerase II"/>
    <property type="evidence" value="ECO:0000315"/>
    <property type="project" value="SGD"/>
</dbReference>
<dbReference type="GO" id="GO:0034503">
    <property type="term" value="P:protein localization to nucleolar rDNA repeats"/>
    <property type="evidence" value="ECO:0000315"/>
    <property type="project" value="SGD"/>
</dbReference>
<dbReference type="GO" id="GO:0070550">
    <property type="term" value="P:rDNA chromatin condensation"/>
    <property type="evidence" value="ECO:0000315"/>
    <property type="project" value="SGD"/>
</dbReference>
<dbReference type="GO" id="GO:0030174">
    <property type="term" value="P:regulation of DNA-templated DNA replication initiation"/>
    <property type="evidence" value="ECO:0000315"/>
    <property type="project" value="SGD"/>
</dbReference>
<dbReference type="GO" id="GO:0006355">
    <property type="term" value="P:regulation of DNA-templated transcription"/>
    <property type="evidence" value="ECO:0000303"/>
    <property type="project" value="ComplexPortal"/>
</dbReference>
<dbReference type="GO" id="GO:0006357">
    <property type="term" value="P:regulation of transcription by RNA polymerase II"/>
    <property type="evidence" value="ECO:0000316"/>
    <property type="project" value="SGD"/>
</dbReference>
<dbReference type="GO" id="GO:0006979">
    <property type="term" value="P:response to oxidative stress"/>
    <property type="evidence" value="ECO:0000303"/>
    <property type="project" value="ComplexPortal"/>
</dbReference>
<dbReference type="GO" id="GO:0006368">
    <property type="term" value="P:transcription elongation by RNA polymerase II"/>
    <property type="evidence" value="ECO:0000316"/>
    <property type="project" value="SGD"/>
</dbReference>
<dbReference type="CDD" id="cd10004">
    <property type="entry name" value="RPD3-like"/>
    <property type="match status" value="1"/>
</dbReference>
<dbReference type="FunFam" id="3.40.800.20:FF:000001">
    <property type="entry name" value="Histone deacetylase"/>
    <property type="match status" value="1"/>
</dbReference>
<dbReference type="Gene3D" id="3.40.800.20">
    <property type="entry name" value="Histone deacetylase domain"/>
    <property type="match status" value="1"/>
</dbReference>
<dbReference type="InterPro" id="IPR050284">
    <property type="entry name" value="HDAC_PDAC"/>
</dbReference>
<dbReference type="InterPro" id="IPR000286">
    <property type="entry name" value="His_deacetylse"/>
</dbReference>
<dbReference type="InterPro" id="IPR003084">
    <property type="entry name" value="His_deacetylse_1"/>
</dbReference>
<dbReference type="InterPro" id="IPR023801">
    <property type="entry name" value="His_deacetylse_dom"/>
</dbReference>
<dbReference type="InterPro" id="IPR037138">
    <property type="entry name" value="His_deacetylse_dom_sf"/>
</dbReference>
<dbReference type="InterPro" id="IPR023696">
    <property type="entry name" value="Ureohydrolase_dom_sf"/>
</dbReference>
<dbReference type="PANTHER" id="PTHR10625:SF10">
    <property type="entry name" value="HISTONE DEACETYLASE HDAC1"/>
    <property type="match status" value="1"/>
</dbReference>
<dbReference type="PANTHER" id="PTHR10625">
    <property type="entry name" value="HISTONE DEACETYLASE HDAC1-RELATED"/>
    <property type="match status" value="1"/>
</dbReference>
<dbReference type="Pfam" id="PF00850">
    <property type="entry name" value="Hist_deacetyl"/>
    <property type="match status" value="1"/>
</dbReference>
<dbReference type="PIRSF" id="PIRSF037913">
    <property type="entry name" value="His_deacetylse_1"/>
    <property type="match status" value="1"/>
</dbReference>
<dbReference type="PRINTS" id="PR01270">
    <property type="entry name" value="HDASUPER"/>
</dbReference>
<dbReference type="PRINTS" id="PR01271">
    <property type="entry name" value="HISDACETLASE"/>
</dbReference>
<dbReference type="SUPFAM" id="SSF52768">
    <property type="entry name" value="Arginase/deacetylase"/>
    <property type="match status" value="1"/>
</dbReference>
<reference key="1">
    <citation type="journal article" date="1991" name="Mol. Cell. Biol.">
        <title>RPD3 encodes a second factor required to achieve maximum positive and negative transcriptional states in Saccharomyces cerevisiae.</title>
        <authorList>
            <person name="Vidal M."/>
            <person name="Gaber R.F."/>
        </authorList>
    </citation>
    <scope>NUCLEOTIDE SEQUENCE [GENOMIC DNA]</scope>
    <scope>FUNCTION</scope>
</reference>
<reference key="2">
    <citation type="journal article" date="1995" name="Yeast">
        <title>An 8.2 kb DNA segment from chromosome XIV carries the RPD3 and PAS8 genes as well as the Saccharomyces cerevisiae homologue of the thiamine-repressed nmt1 gene and a chromosome III-duplicated gene for a putative aryl-alcohol dehydrogenase.</title>
        <authorList>
            <person name="van Dyck L."/>
            <person name="Pascual-Ahuir A."/>
            <person name="Purnelle B."/>
            <person name="Goffeau A."/>
        </authorList>
    </citation>
    <scope>NUCLEOTIDE SEQUENCE [GENOMIC DNA]</scope>
    <source>
        <strain>ATCC 96604 / S288c / FY1679</strain>
    </source>
</reference>
<reference key="3">
    <citation type="journal article" date="1997" name="Nature">
        <title>The nucleotide sequence of Saccharomyces cerevisiae chromosome XIV and its evolutionary implications.</title>
        <authorList>
            <person name="Philippsen P."/>
            <person name="Kleine K."/>
            <person name="Poehlmann R."/>
            <person name="Duesterhoeft A."/>
            <person name="Hamberg K."/>
            <person name="Hegemann J.H."/>
            <person name="Obermaier B."/>
            <person name="Urrestarazu L.A."/>
            <person name="Aert R."/>
            <person name="Albermann K."/>
            <person name="Altmann R."/>
            <person name="Andre B."/>
            <person name="Baladron V."/>
            <person name="Ballesta J.P.G."/>
            <person name="Becam A.-M."/>
            <person name="Beinhauer J.D."/>
            <person name="Boskovic J."/>
            <person name="Buitrago M.J."/>
            <person name="Bussereau F."/>
            <person name="Coster F."/>
            <person name="Crouzet M."/>
            <person name="D'Angelo M."/>
            <person name="Dal Pero F."/>
            <person name="De Antoni A."/>
            <person name="del Rey F."/>
            <person name="Doignon F."/>
            <person name="Domdey H."/>
            <person name="Dubois E."/>
            <person name="Fiedler T.A."/>
            <person name="Fleig U."/>
            <person name="Floeth M."/>
            <person name="Fritz C."/>
            <person name="Gaillardin C."/>
            <person name="Garcia-Cantalejo J.M."/>
            <person name="Glansdorff N."/>
            <person name="Goffeau A."/>
            <person name="Gueldener U."/>
            <person name="Herbert C.J."/>
            <person name="Heumann K."/>
            <person name="Heuss-Neitzel D."/>
            <person name="Hilbert H."/>
            <person name="Hinni K."/>
            <person name="Iraqui Houssaini I."/>
            <person name="Jacquet M."/>
            <person name="Jimenez A."/>
            <person name="Jonniaux J.-L."/>
            <person name="Karpfinger-Hartl L."/>
            <person name="Lanfranchi G."/>
            <person name="Lepingle A."/>
            <person name="Levesque H."/>
            <person name="Lyck R."/>
            <person name="Maftahi M."/>
            <person name="Mallet L."/>
            <person name="Maurer C.T.C."/>
            <person name="Messenguy F."/>
            <person name="Mewes H.-W."/>
            <person name="Moestl D."/>
            <person name="Nasr F."/>
            <person name="Nicaud J.-M."/>
            <person name="Niedenthal R.K."/>
            <person name="Pandolfo D."/>
            <person name="Pierard A."/>
            <person name="Piravandi E."/>
            <person name="Planta R.J."/>
            <person name="Pohl T.M."/>
            <person name="Purnelle B."/>
            <person name="Rebischung C."/>
            <person name="Remacha M.A."/>
            <person name="Revuelta J.L."/>
            <person name="Rinke M."/>
            <person name="Saiz J.E."/>
            <person name="Sartorello F."/>
            <person name="Scherens B."/>
            <person name="Sen-Gupta M."/>
            <person name="Soler-Mira A."/>
            <person name="Urbanus J.H.M."/>
            <person name="Valle G."/>
            <person name="Van Dyck L."/>
            <person name="Verhasselt P."/>
            <person name="Vierendeels F."/>
            <person name="Vissers S."/>
            <person name="Voet M."/>
            <person name="Volckaert G."/>
            <person name="Wach A."/>
            <person name="Wambutt R."/>
            <person name="Wedler H."/>
            <person name="Zollner A."/>
            <person name="Hani J."/>
        </authorList>
    </citation>
    <scope>NUCLEOTIDE SEQUENCE [LARGE SCALE GENOMIC DNA]</scope>
    <source>
        <strain>ATCC 204508 / S288c</strain>
    </source>
</reference>
<reference key="4">
    <citation type="journal article" date="2014" name="G3 (Bethesda)">
        <title>The reference genome sequence of Saccharomyces cerevisiae: Then and now.</title>
        <authorList>
            <person name="Engel S.R."/>
            <person name="Dietrich F.S."/>
            <person name="Fisk D.G."/>
            <person name="Binkley G."/>
            <person name="Balakrishnan R."/>
            <person name="Costanzo M.C."/>
            <person name="Dwight S.S."/>
            <person name="Hitz B.C."/>
            <person name="Karra K."/>
            <person name="Nash R.S."/>
            <person name="Weng S."/>
            <person name="Wong E.D."/>
            <person name="Lloyd P."/>
            <person name="Skrzypek M.S."/>
            <person name="Miyasato S.R."/>
            <person name="Simison M."/>
            <person name="Cherry J.M."/>
        </authorList>
    </citation>
    <scope>GENOME REANNOTATION</scope>
    <source>
        <strain>ATCC 204508 / S288c</strain>
    </source>
</reference>
<reference key="5">
    <citation type="journal article" date="2007" name="Genome Res.">
        <title>Approaching a complete repository of sequence-verified protein-encoding clones for Saccharomyces cerevisiae.</title>
        <authorList>
            <person name="Hu Y."/>
            <person name="Rolfs A."/>
            <person name="Bhullar B."/>
            <person name="Murthy T.V.S."/>
            <person name="Zhu C."/>
            <person name="Berger M.F."/>
            <person name="Camargo A.A."/>
            <person name="Kelley F."/>
            <person name="McCarron S."/>
            <person name="Jepson D."/>
            <person name="Richardson A."/>
            <person name="Raphael J."/>
            <person name="Moreira D."/>
            <person name="Taycher E."/>
            <person name="Zuo D."/>
            <person name="Mohr S."/>
            <person name="Kane M.F."/>
            <person name="Williamson J."/>
            <person name="Simpson A.J.G."/>
            <person name="Bulyk M.L."/>
            <person name="Harlow E."/>
            <person name="Marsischky G."/>
            <person name="Kolodner R.D."/>
            <person name="LaBaer J."/>
        </authorList>
    </citation>
    <scope>NUCLEOTIDE SEQUENCE [GENOMIC DNA]</scope>
    <source>
        <strain>ATCC 204508 / S288c</strain>
    </source>
</reference>
<reference key="6">
    <citation type="journal article" date="1995" name="Yeast">
        <title>Sequencing analysis of a 15.4 kb fragment of yeast chromosome XIV identifies the RPD3, PAS8 and KRE1 loci, five new open reading frames.</title>
        <authorList>
            <person name="Maftahi M."/>
            <person name="Nicaud J.-M."/>
            <person name="Levesque H."/>
            <person name="Gaillardin C."/>
        </authorList>
    </citation>
    <scope>NUCLEOTIDE SEQUENCE [GENOMIC DNA] OF 1-201</scope>
    <source>
        <strain>S288c / FY1676</strain>
    </source>
</reference>
<reference key="7">
    <citation type="journal article" date="1996" name="Genetics">
        <title>Evidence that the transcriptional regulators SIN3 and RPD3, and a novel gene (SDS3) with similar functions, are involved in transcriptional silencing in S. cerevisiae.</title>
        <authorList>
            <person name="Vannier D."/>
            <person name="Balderes D."/>
            <person name="Shore D."/>
        </authorList>
    </citation>
    <scope>FUNCTION</scope>
    <source>
        <strain>ATCC 200060 / W303</strain>
    </source>
</reference>
<reference key="8">
    <citation type="journal article" date="1996" name="Proc. Natl. Acad. Sci. U.S.A.">
        <title>HDA1 and RPD3 are members of distinct yeast histone deacetylase complexes that regulate silencing and transcription.</title>
        <authorList>
            <person name="Rundlett S.E."/>
            <person name="Carmen A.A."/>
            <person name="Kobayashi R."/>
            <person name="Bavykin S."/>
            <person name="Turner B.M."/>
            <person name="Grunstein M."/>
        </authorList>
    </citation>
    <scope>FUNCTION</scope>
    <scope>IDENTIFICATION IN A HISTONE DEACETYLASE COMPLEX</scope>
</reference>
<reference key="9">
    <citation type="journal article" date="1996" name="Yeast">
        <title>Identification of two CyP-40-like cyclophilins in Saccharomyces cerevisiae, one of which is required for normal growth.</title>
        <authorList>
            <person name="Duina A.A."/>
            <person name="Marsh J.A."/>
            <person name="Gaber R.F."/>
        </authorList>
    </citation>
    <scope>INTERACTION WITH CPR6 AND CPR7</scope>
</reference>
<reference key="10">
    <citation type="journal article" date="1997" name="Mol. Cell. Biol.">
        <title>A large protein complex containing the yeast Sin3p and Rpd3p transcriptional regulators.</title>
        <authorList>
            <person name="Kasten M.M."/>
            <person name="Dorland S."/>
            <person name="Stillman D.J."/>
        </authorList>
    </citation>
    <scope>IDENTIFICATION IN THE RPD3 COMPLEX</scope>
</reference>
<reference key="11">
    <citation type="journal article" date="1998" name="Genes Dev.">
        <title>Histone deacetylase activity of Rpd3 is important for transcriptional repression in vivo.</title>
        <authorList>
            <person name="Kadosh D."/>
            <person name="Struhl K."/>
        </authorList>
    </citation>
    <scope>FUNCTION</scope>
    <scope>MUTAGENESIS OF HIS-150; HIS-151 AND HIS-188</scope>
</reference>
<reference key="12">
    <citation type="journal article" date="1998" name="Mol. Cell. Biol.">
        <title>Targeted recruitment of the Sin3-Rpd3 histone deacetylase complex generates a highly localized domain of repressed chromatin in vivo.</title>
        <authorList>
            <person name="Kadosh D."/>
            <person name="Struhl K."/>
        </authorList>
    </citation>
    <scope>FUNCTION OF THE RPD3 COMPLEX</scope>
</reference>
<reference key="13">
    <citation type="journal article" date="1998" name="Nature">
        <title>Transcriptional repression by UME6 involves deacetylation of lysine 5 of histone H4 by RPD3.</title>
        <authorList>
            <person name="Rundlett S.E."/>
            <person name="Carmen A.A."/>
            <person name="Suka N."/>
            <person name="Turner B.M."/>
            <person name="Grunstein M."/>
        </authorList>
    </citation>
    <scope>DEACETYLATION OF HISTONE H4</scope>
</reference>
<reference key="14">
    <citation type="journal article" date="1999" name="Curr. Genet.">
        <title>RPD3 (REC3) mutations affect mitotic recombination in Saccharomyces cerevisiae.</title>
        <authorList>
            <person name="Dora E.G."/>
            <person name="Rudin N."/>
            <person name="Martell J.R."/>
            <person name="Esposito M.S."/>
            <person name="Ramirez R.M."/>
        </authorList>
    </citation>
    <scope>FUNCTION</scope>
</reference>
<reference key="15">
    <citation type="journal article" date="1999" name="Genetics">
        <title>A general requirement for the Sin3-Rpd3 histone deacetylase complex in regulating silencing in Saccharomyces cerevisiae.</title>
        <authorList>
            <person name="Sun Z.-W."/>
            <person name="Hampsey M."/>
        </authorList>
    </citation>
    <scope>FUNCTION OF THE RPD3 COMPLEX</scope>
</reference>
<reference key="16">
    <citation type="journal article" date="1999" name="Proc. Natl. Acad. Sci. U.S.A.">
        <title>GCN5-dependent histone H3 acetylation and RPD3-dependent histone H4 deacetylation have distinct, opposing effects on IME2 transcription, during meiosis and during vegetative growth, in budding yeast.</title>
        <authorList>
            <person name="Burgess S.M."/>
            <person name="Ajimura M."/>
            <person name="Kleckner N."/>
        </authorList>
    </citation>
    <scope>FUNCTION</scope>
</reference>
<reference key="17">
    <citation type="journal article" date="2000" name="EMBO J.">
        <title>Cyclophilin A and Ess1 interact with and regulate silencing by the Sin3-Rpd3 histone deacetylase.</title>
        <authorList>
            <person name="Arevalo-Rodriguez M."/>
            <person name="Cardenas M.E."/>
            <person name="Wu X."/>
            <person name="Hanes S.D."/>
            <person name="Heitman J."/>
        </authorList>
    </citation>
    <scope>INTERACTION WITH CPR1 AND ESS1</scope>
</reference>
<reference key="18">
    <citation type="journal article" date="2000" name="Genes Dev.">
        <title>Ssn6-Tup1 interacts with class I histone deacetylases required for repression.</title>
        <authorList>
            <person name="Watson A.D."/>
            <person name="Edmondson D.G."/>
            <person name="Bone J.R."/>
            <person name="Mukai Y."/>
            <person name="Yu Y."/>
            <person name="Du W."/>
            <person name="Stillman D.J."/>
            <person name="Roth S.Y."/>
        </authorList>
    </citation>
    <scope>FUNCTION</scope>
</reference>
<reference key="19">
    <citation type="journal article" date="2000" name="Nucleic Acids Res.">
        <title>Combinatorial regulation of phospholipid biosynthetic gene expression by the UME6, SIN3 and RPD3 genes.</title>
        <authorList>
            <person name="Elkhaimi M."/>
            <person name="Kaadige M.R."/>
            <person name="Kamath D."/>
            <person name="Jackson J.C."/>
            <person name="Biliran H. Jr."/>
            <person name="Lopes J.M."/>
        </authorList>
    </citation>
    <scope>FUNCTION</scope>
</reference>
<reference key="20">
    <citation type="journal article" date="2002" name="EMBO J.">
        <title>RPD3 is required for the inactivation of yeast ribosomal DNA genes in stationary phase.</title>
        <authorList>
            <person name="Sandmeier J.J."/>
            <person name="French S."/>
            <person name="Osheim Y."/>
            <person name="Cheung W.L."/>
            <person name="Gallo C.M."/>
            <person name="Beyer A.L."/>
            <person name="Smith J.S."/>
        </authorList>
    </citation>
    <scope>INTERACTION WITH CYC8</scope>
</reference>
<reference key="21">
    <citation type="journal article" date="2002" name="J. Biol. Chem.">
        <title>A conserved motif common to the histone acetyltransferase Esa1 and the histone deacetylase Rpd3.</title>
        <authorList>
            <person name="Adachi N."/>
            <person name="Kimura A."/>
            <person name="Horikoshi M."/>
        </authorList>
    </citation>
    <scope>CATALYTIC ACTIVITY</scope>
    <scope>DOMAIN</scope>
    <scope>MUTAGENESIS OF TRP-322; GLU-325; GLY-327; LEU-328; LEU-329; VAL-332; LEU-334; ASP-335; LEU-338 AND PRO-339</scope>
</reference>
<reference key="22">
    <citation type="journal article" date="2002" name="Mol. Cell. Biol.">
        <title>Targeted recruitment of Rpd3 histone deacetylase represses transcription by inhibiting recruitment of Swi/Snf, SAGA, and TATA binding protein.</title>
        <authorList>
            <person name="Deckert J."/>
            <person name="Struhl K."/>
        </authorList>
    </citation>
    <scope>FUNCTION</scope>
</reference>
<reference key="23">
    <citation type="journal article" date="2002" name="Nat. Genet.">
        <title>Genome-wide binding map of the histone deacetylase Rpd3 in yeast.</title>
        <authorList>
            <person name="Kurdistani S.K."/>
            <person name="Robyr D."/>
            <person name="Tavazoie S."/>
            <person name="Grunstein M."/>
        </authorList>
    </citation>
    <scope>FUNCTION</scope>
    <scope>DNA-BINDING</scope>
</reference>
<reference key="24">
    <citation type="journal article" date="2003" name="J. Biol. Chem.">
        <title>Opposite role of yeast ING family members in p53-dependent transcriptional activation.</title>
        <authorList>
            <person name="Nourani A."/>
            <person name="Howe L."/>
            <person name="Pray-Grant M.G."/>
            <person name="Workman J.L."/>
            <person name="Grant P.A."/>
            <person name="Cote J."/>
        </authorList>
    </citation>
    <scope>IDENTIFICATION IN THE RPD3 COMPLEX</scope>
    <scope>IDENTIFICATION BY MASS SPECTROMETRY</scope>
</reference>
<reference key="25">
    <citation type="journal article" date="2003" name="Mol. Cell. Biol.">
        <title>Loss of Sin3/Rpd3 histone deacetylase restores the DNA damage response in checkpoint-deficient strains of Saccharomyces cerevisiae.</title>
        <authorList>
            <person name="Scott K.L."/>
            <person name="Plon S.E."/>
        </authorList>
    </citation>
    <scope>FUNCTION OF THE RPD3 COMPLEX</scope>
</reference>
<reference key="26">
    <citation type="journal article" date="2003" name="Nature">
        <title>Global analysis of protein localization in budding yeast.</title>
        <authorList>
            <person name="Huh W.-K."/>
            <person name="Falvo J.V."/>
            <person name="Gerke L.C."/>
            <person name="Carroll A.S."/>
            <person name="Howson R.W."/>
            <person name="Weissman J.S."/>
            <person name="O'Shea E.K."/>
        </authorList>
    </citation>
    <scope>SUBCELLULAR LOCATION [LARGE SCALE ANALYSIS]</scope>
</reference>
<reference key="27">
    <citation type="journal article" date="2003" name="Nature">
        <title>Global analysis of protein expression in yeast.</title>
        <authorList>
            <person name="Ghaemmaghami S."/>
            <person name="Huh W.-K."/>
            <person name="Bower K."/>
            <person name="Howson R.W."/>
            <person name="Belle A."/>
            <person name="Dephoure N."/>
            <person name="O'Shea E.K."/>
            <person name="Weissman J.S."/>
        </authorList>
    </citation>
    <scope>LEVEL OF PROTEIN EXPRESSION [LARGE SCALE ANALYSIS]</scope>
</reference>
<reference key="28">
    <citation type="journal article" date="2004" name="EMBO J.">
        <title>The unfolded protein response represses differentiation through the RPD3-SIN3 histone deacetylase.</title>
        <authorList>
            <person name="Schroeder M."/>
            <person name="Clark R."/>
            <person name="Liu C.Y."/>
            <person name="Kaufman R.J."/>
        </authorList>
    </citation>
    <scope>INTERACTION WITH HAC1</scope>
    <scope>FUNCTION OF THE RPD3 COMPLEX</scope>
</reference>
<reference key="29">
    <citation type="journal article" date="2004" name="Mol. Cell. Biol.">
        <title>The Rpd3-Sin3 histone deacetylase regulates replication timing and enables intra-S origin control in Saccharomyces cerevisiae.</title>
        <authorList>
            <person name="Aparicio J.G."/>
            <person name="Viggiani C.J."/>
            <person name="Gibson D.G."/>
            <person name="Aparicio O.M."/>
        </authorList>
    </citation>
    <scope>FUNCTION</scope>
</reference>
<reference key="30">
    <citation type="journal article" date="2004" name="Mol. Cell. Biol.">
        <title>Genome-wide analysis of the relationship between transcriptional regulation by Rpd3p and the histone H3 and H4 amino termini in budding yeast.</title>
        <authorList>
            <person name="Sabet N."/>
            <person name="Volo S."/>
            <person name="Yu C."/>
            <person name="Madigan J.P."/>
            <person name="Morse R.H."/>
        </authorList>
    </citation>
    <scope>FUNCTION</scope>
</reference>
<reference key="31">
    <citation type="journal article" date="2004" name="Nature">
        <title>The MAPK Hog1 recruits Rpd3 histone deacetylase to activate osmoresponsive genes.</title>
        <authorList>
            <person name="De Nadal E."/>
            <person name="Zapater M."/>
            <person name="Alepuz P.M."/>
            <person name="Sumoy L."/>
            <person name="Mas G."/>
            <person name="Posas F."/>
        </authorList>
    </citation>
    <scope>INTERACTION WITH HOG1</scope>
    <scope>FUNCTION OF THE RPD3 COMPLEX</scope>
</reference>
<reference key="32">
    <citation type="journal article" date="2004" name="Proc. Natl. Acad. Sci. U.S.A.">
        <title>Saccharomyces cerevisiae Sin3p facilitates DNA double-strand break repair.</title>
        <authorList>
            <person name="Jazayeri A."/>
            <person name="McAinsh A.D."/>
            <person name="Jackson S.P."/>
        </authorList>
    </citation>
    <scope>FUNCTION OF THE RPD3 COMPLEX</scope>
</reference>
<reference key="33">
    <citation type="journal article" date="2005" name="Biochim. Biophys. Acta">
        <title>Stable incorporation of sequence specific repressors Ash1 and Ume6 into the Rpd3L complex.</title>
        <authorList>
            <person name="Carrozza M.J."/>
            <person name="Florens L."/>
            <person name="Swanson S.K."/>
            <person name="Shia W.-J."/>
            <person name="Anderson S."/>
            <person name="Yates J."/>
            <person name="Washburn M.P."/>
            <person name="Workman J.L."/>
        </authorList>
    </citation>
    <scope>IDENTIFICATION IN THE RPD3C(L) COMPLEX</scope>
    <scope>IDENTIFICATION BY MASS SPECTROMETRY</scope>
</reference>
<reference key="34">
    <citation type="journal article" date="2005" name="Cell">
        <title>Cotranscriptional set2 methylation of histone H3 lysine 36 recruits a repressive Rpd3 complex.</title>
        <authorList>
            <person name="Keogh M.-C."/>
            <person name="Kurdistani S.K."/>
            <person name="Morris S.A."/>
            <person name="Ahn S.H."/>
            <person name="Podolny V."/>
            <person name="Collins S.R."/>
            <person name="Schuldiner M."/>
            <person name="Chin K."/>
            <person name="Punna T."/>
            <person name="Thompson N.J."/>
            <person name="Boone C."/>
            <person name="Emili A."/>
            <person name="Weissman J.S."/>
            <person name="Hughes T.R."/>
            <person name="Strahl B.D."/>
            <person name="Grunstein M."/>
            <person name="Greenblatt J.F."/>
            <person name="Buratowski S."/>
            <person name="Krogan N.J."/>
        </authorList>
    </citation>
    <scope>IDENTIFICATION IN THE RPD3C(L) AND RPD3C(S) COMPLEXES</scope>
    <scope>IDENTIFICATION BY MASS SPECTROMETRY</scope>
    <scope>FUNCTION OF THE RPD3C(S) COMPLEX</scope>
</reference>
<reference key="35">
    <citation type="journal article" date="2005" name="Genetics">
        <title>Multiple bromodomain genes are involved in restricting the spread of heterochromatic silencing at the Saccharomyces cerevisiae HMR-tRNA boundary.</title>
        <authorList>
            <person name="Jambunathan N."/>
            <person name="Martinez A.W."/>
            <person name="Robert E.C."/>
            <person name="Agochukwu N.B."/>
            <person name="Ibos M.E."/>
            <person name="Dugas S.L."/>
            <person name="Donze D."/>
        </authorList>
    </citation>
    <scope>DISRUPTION PHENOTYPE</scope>
</reference>
<reference key="36">
    <citation type="journal article" date="2007" name="J. Proteome Res.">
        <title>Large-scale phosphorylation analysis of alpha-factor-arrested Saccharomyces cerevisiae.</title>
        <authorList>
            <person name="Li X."/>
            <person name="Gerber S.A."/>
            <person name="Rudner A.D."/>
            <person name="Beausoleil S.A."/>
            <person name="Haas W."/>
            <person name="Villen J."/>
            <person name="Elias J.E."/>
            <person name="Gygi S.P."/>
        </authorList>
    </citation>
    <scope>PHOSPHORYLATION [LARGE SCALE ANALYSIS] AT THR-394</scope>
    <scope>IDENTIFICATION BY MASS SPECTROMETRY [LARGE SCALE ANALYSIS]</scope>
    <source>
        <strain>ADR376</strain>
    </source>
</reference>
<reference key="37">
    <citation type="journal article" date="2008" name="Mol. Cell. Proteomics">
        <title>A multidimensional chromatography technology for in-depth phosphoproteome analysis.</title>
        <authorList>
            <person name="Albuquerque C.P."/>
            <person name="Smolka M.B."/>
            <person name="Payne S.H."/>
            <person name="Bafna V."/>
            <person name="Eng J."/>
            <person name="Zhou H."/>
        </authorList>
    </citation>
    <scope>PHOSPHORYLATION [LARGE SCALE ANALYSIS] AT THR-394 AND SER-408</scope>
    <scope>IDENTIFICATION BY MASS SPECTROMETRY [LARGE SCALE ANALYSIS]</scope>
</reference>
<reference key="38">
    <citation type="journal article" date="2009" name="Science">
        <title>Global analysis of Cdk1 substrate phosphorylation sites provides insights into evolution.</title>
        <authorList>
            <person name="Holt L.J."/>
            <person name="Tuch B.B."/>
            <person name="Villen J."/>
            <person name="Johnson A.D."/>
            <person name="Gygi S.P."/>
            <person name="Morgan D.O."/>
        </authorList>
    </citation>
    <scope>PHOSPHORYLATION [LARGE SCALE ANALYSIS] AT SER-408</scope>
    <scope>IDENTIFICATION BY MASS SPECTROMETRY [LARGE SCALE ANALYSIS]</scope>
</reference>
<protein>
    <recommendedName>
        <fullName>Histone deacetylase RPD3</fullName>
        <ecNumber evidence="9">3.5.1.98</ecNumber>
    </recommendedName>
    <alternativeName>
        <fullName>Transcriptional regulatory protein RPD3</fullName>
    </alternativeName>
</protein>
<keyword id="KW-0002">3D-structure</keyword>
<keyword id="KW-0156">Chromatin regulator</keyword>
<keyword id="KW-0963">Cytoplasm</keyword>
<keyword id="KW-0378">Hydrolase</keyword>
<keyword id="KW-0539">Nucleus</keyword>
<keyword id="KW-0597">Phosphoprotein</keyword>
<keyword id="KW-1185">Reference proteome</keyword>
<keyword id="KW-0678">Repressor</keyword>
<keyword id="KW-0804">Transcription</keyword>
<keyword id="KW-0805">Transcription regulation</keyword>
<gene>
    <name type="primary">RPD3</name>
    <name type="synonym">MOF6</name>
    <name type="synonym">REC3</name>
    <name type="synonym">SDI2</name>
    <name type="synonym">SDS6</name>
    <name type="ordered locus">YNL330C</name>
    <name type="ORF">N0305</name>
</gene>
<name>RPD3_YEAST</name>
<proteinExistence type="evidence at protein level"/>
<evidence type="ECO:0000256" key="1">
    <source>
        <dbReference type="SAM" id="MobiDB-lite"/>
    </source>
</evidence>
<evidence type="ECO:0000269" key="2">
    <source>
    </source>
</evidence>
<evidence type="ECO:0000269" key="3">
    <source>
    </source>
</evidence>
<evidence type="ECO:0000269" key="4">
    <source>
    </source>
</evidence>
<evidence type="ECO:0000269" key="5">
    <source>
    </source>
</evidence>
<evidence type="ECO:0000269" key="6">
    <source>
    </source>
</evidence>
<evidence type="ECO:0000269" key="7">
    <source>
    </source>
</evidence>
<evidence type="ECO:0000269" key="8">
    <source>
    </source>
</evidence>
<evidence type="ECO:0000269" key="9">
    <source>
    </source>
</evidence>
<evidence type="ECO:0000269" key="10">
    <source>
    </source>
</evidence>
<evidence type="ECO:0000269" key="11">
    <source>
    </source>
</evidence>
<evidence type="ECO:0000269" key="12">
    <source>
    </source>
</evidence>
<evidence type="ECO:0000269" key="13">
    <source>
    </source>
</evidence>
<evidence type="ECO:0000269" key="14">
    <source>
    </source>
</evidence>
<evidence type="ECO:0000269" key="15">
    <source>
    </source>
</evidence>
<evidence type="ECO:0000269" key="16">
    <source>
    </source>
</evidence>
<evidence type="ECO:0000269" key="17">
    <source>
    </source>
</evidence>
<evidence type="ECO:0000269" key="18">
    <source>
    </source>
</evidence>
<evidence type="ECO:0000269" key="19">
    <source>
    </source>
</evidence>
<evidence type="ECO:0000269" key="20">
    <source>
    </source>
</evidence>
<evidence type="ECO:0000269" key="21">
    <source>
    </source>
</evidence>
<evidence type="ECO:0000269" key="22">
    <source>
    </source>
</evidence>
<evidence type="ECO:0000269" key="23">
    <source>
    </source>
</evidence>
<evidence type="ECO:0000269" key="24">
    <source>
    </source>
</evidence>
<evidence type="ECO:0000269" key="25">
    <source>
    </source>
</evidence>
<evidence type="ECO:0000269" key="26">
    <source>
    </source>
</evidence>
<evidence type="ECO:0000269" key="27">
    <source>
    </source>
</evidence>
<evidence type="ECO:0000269" key="28">
    <source>
    </source>
</evidence>
<evidence type="ECO:0000269" key="29">
    <source>
    </source>
</evidence>
<evidence type="ECO:0000269" key="30">
    <source>
    </source>
</evidence>
<evidence type="ECO:0000305" key="31"/>
<evidence type="ECO:0007744" key="32">
    <source>
    </source>
</evidence>
<evidence type="ECO:0007744" key="33">
    <source>
    </source>
</evidence>
<evidence type="ECO:0007744" key="34">
    <source>
    </source>
</evidence>
<evidence type="ECO:0007829" key="35">
    <source>
        <dbReference type="PDB" id="7YI0"/>
    </source>
</evidence>
<evidence type="ECO:0007829" key="36">
    <source>
        <dbReference type="PDB" id="8HPO"/>
    </source>
</evidence>
<evidence type="ECO:0007829" key="37">
    <source>
        <dbReference type="PDB" id="8KD2"/>
    </source>
</evidence>
<evidence type="ECO:0007829" key="38">
    <source>
        <dbReference type="PDB" id="8KD6"/>
    </source>
</evidence>
<evidence type="ECO:0007829" key="39">
    <source>
        <dbReference type="PDB" id="8TOF"/>
    </source>
</evidence>
<sequence>MVYEATPFDPITVKPSDKRRVAYFYDADVGNYAYGAGHPMKPHRIRMAHSLIMNYGLYKKMEIYRAKPATKQEMCQFHTDEYIDFLSRVTPDNLEMFKRESVKFNVGDDCPVFDGLYEYCSISGGGSMEGAARLNRGKCDVAVNYAGGLHHAKKSEASGFCYLNDIVLGIIELLRYHPRVLYIDIDVHHGDGVEEAFYTTDRVMTCSFHKYGEFFPGTGELRDIGVGAGKNYAVNVPLRDGIDDATYRSVFEPVIKKIMEWYQPSAVVLQCGGDSLSGDRLGCFNLSMEGHANCVNYVKSFGIPMMVVGGGGYTMRNVARTWCFETGLLNNVVLDKDLPYNEYYEYYGPDYKLSVRPSNMFNVNTPEYLDKVMTNIFANLENTKYAPSVQLNHTPRDAEDLGDVEEDSAEAKDTKGGSQYARDLHVEHDNEFY</sequence>
<comment type="function">
    <text evidence="2 3 4 6 7 8 10 13 16 17 18 19 20 22 24 26 27 29 30">Catalytic component of the RPD3 histone deacetylase (HDAC) complexes RPD3C(L) and RPD3C(S) responsible for the deacetylation of lysine residues on the N-terminal part of the core histones (H2A, H2B, H3 and H4). Histone deacetylation plays an important role in transcriptional regulation, cell cycle progression, DNA damage response, osmotic stress response and developmental events. Is involved in rDNA and telomere silencing and in double strand breaks repair. Required for both full transcription repression and activation of many genes including cell type-specific genes (STE6, TY2 and HO), cell differentiation-specific genes (SPO13), genes that respond to external signals (PHO5) and TRK2. The RPD3 complexes regulate also chromosomal replication timing.</text>
</comment>
<comment type="catalytic activity">
    <reaction evidence="9">
        <text>N(6)-acetyl-L-lysyl-[histone] + H2O = L-lysyl-[histone] + acetate</text>
        <dbReference type="Rhea" id="RHEA:58196"/>
        <dbReference type="Rhea" id="RHEA-COMP:9845"/>
        <dbReference type="Rhea" id="RHEA-COMP:11338"/>
        <dbReference type="ChEBI" id="CHEBI:15377"/>
        <dbReference type="ChEBI" id="CHEBI:29969"/>
        <dbReference type="ChEBI" id="CHEBI:30089"/>
        <dbReference type="ChEBI" id="CHEBI:61930"/>
        <dbReference type="EC" id="3.5.1.98"/>
    </reaction>
    <physiologicalReaction direction="left-to-right" evidence="9">
        <dbReference type="Rhea" id="RHEA:58197"/>
    </physiologicalReaction>
</comment>
<comment type="subunit">
    <text evidence="5 11 12 17 18 22 23 25 26 28">Component of the RPD3C(L) complex composed of at least ASH1, CTI6, DEP1, PHO23, RPD3, RXT2, RXT3, SAP30, SDS3, SIN3, UME1 and UME6. Component of the RPD3C(S) complex composed of at least EAF3, RCO1, RPD3, SIN3, and UME1. Interacts with cyclophilins CPR1, CPR6 and CPR7, with the kinase HOG1, and with ESS1, CYC8 and HAC1.</text>
</comment>
<comment type="interaction">
    <interactant intactId="EBI-15864">
        <id>P32561</id>
    </interactant>
    <interactant intactId="EBI-5429">
        <id>P53691</id>
        <label>CPR6</label>
    </interactant>
    <organismsDiffer>false</organismsDiffer>
    <experiments>2</experiments>
</comment>
<comment type="interaction">
    <interactant intactId="EBI-15864">
        <id>P32561</id>
    </interactant>
    <interactant intactId="EBI-5436">
        <id>P47103</id>
        <label>CPR7</label>
    </interactant>
    <organismsDiffer>false</organismsDiffer>
    <experiments>2</experiments>
</comment>
<comment type="interaction">
    <interactant intactId="EBI-15864">
        <id>P32561</id>
    </interactant>
    <interactant intactId="EBI-18215">
        <id>P14922</id>
        <label>CYC8</label>
    </interactant>
    <organismsDiffer>false</organismsDiffer>
    <experiments>6</experiments>
</comment>
<comment type="interaction">
    <interactant intactId="EBI-15864">
        <id>P32561</id>
    </interactant>
    <interactant intactId="EBI-27382">
        <id>Q03214</id>
        <label>ECM5</label>
    </interactant>
    <organismsDiffer>false</organismsDiffer>
    <experiments>5</experiments>
</comment>
<comment type="interaction">
    <interactant intactId="EBI-15864">
        <id>P32561</id>
    </interactant>
    <interactant intactId="EBI-27376">
        <id>Q03213</id>
        <label>HOT1</label>
    </interactant>
    <organismsDiffer>false</organismsDiffer>
    <experiments>3</experiments>
</comment>
<comment type="interaction">
    <interactant intactId="EBI-15864">
        <id>P32561</id>
    </interactant>
    <interactant intactId="EBI-21537">
        <id>P38255</id>
        <label>RXT2</label>
    </interactant>
    <organismsDiffer>false</organismsDiffer>
    <experiments>7</experiments>
</comment>
<comment type="interaction">
    <interactant intactId="EBI-15864">
        <id>P32561</id>
    </interactant>
    <interactant intactId="EBI-17160">
        <id>P22579</id>
        <label>SIN3</label>
    </interactant>
    <organismsDiffer>false</organismsDiffer>
    <experiments>11</experiments>
</comment>
<comment type="interaction">
    <interactant intactId="EBI-15864">
        <id>P32561</id>
    </interactant>
    <interactant intactId="EBI-19654">
        <id>P16649</id>
        <label>TUP1</label>
    </interactant>
    <organismsDiffer>false</organismsDiffer>
    <experiments>2</experiments>
</comment>
<comment type="subcellular location">
    <subcellularLocation>
        <location evidence="14">Cytoplasm</location>
    </subcellularLocation>
    <subcellularLocation>
        <location evidence="14">Nucleus</location>
    </subcellularLocation>
</comment>
<comment type="domain">
    <text evidence="9">The ESA1-RPD3 (ER) motif is common to ESA1 and RPD3 and is required for ESA1 histone acetyl-transferase (HAT) activity and RPD3 histone deacetylase (HDAC) activity.</text>
</comment>
<comment type="disruption phenotype">
    <text evidence="21">Heterochromatin spreading downstream of the silent mating-type locus HMR.</text>
</comment>
<comment type="miscellaneous">
    <text evidence="15">Present with 3850 molecules/cell in log phase SD medium.</text>
</comment>
<comment type="similarity">
    <text evidence="31">Belongs to the histone deacetylase family. HD type 1 subfamily.</text>
</comment>
<feature type="chain" id="PRO_0000114724" description="Histone deacetylase RPD3">
    <location>
        <begin position="1"/>
        <end position="433"/>
    </location>
</feature>
<feature type="region of interest" description="Histone deacetylase">
    <location>
        <begin position="19"/>
        <end position="331"/>
    </location>
</feature>
<feature type="region of interest" description="Disordered" evidence="1">
    <location>
        <begin position="388"/>
        <end position="433"/>
    </location>
</feature>
<feature type="short sequence motif" description="ESA1-RPD3 motif">
    <location>
        <begin position="320"/>
        <end position="340"/>
    </location>
</feature>
<feature type="compositionally biased region" description="Basic and acidic residues" evidence="1">
    <location>
        <begin position="422"/>
        <end position="433"/>
    </location>
</feature>
<feature type="active site" evidence="31">
    <location>
        <position position="151"/>
    </location>
</feature>
<feature type="modified residue" description="Phosphothreonine" evidence="32 33">
    <location>
        <position position="394"/>
    </location>
</feature>
<feature type="modified residue" description="Phosphoserine" evidence="33 34">
    <location>
        <position position="408"/>
    </location>
</feature>
<feature type="mutagenesis site" description="Impairs histone deacetylase activity and transcription repression." evidence="29">
    <original>H</original>
    <variation>A</variation>
    <location>
        <position position="150"/>
    </location>
</feature>
<feature type="mutagenesis site" description="Impairs histone deacetylase activity and transcription repression." evidence="29">
    <original>H</original>
    <variation>A</variation>
    <location>
        <position position="151"/>
    </location>
</feature>
<feature type="mutagenesis site" description="Impairs histone deacetylase activity and transcription repression." evidence="29">
    <original>H</original>
    <variation>A</variation>
    <location>
        <position position="188"/>
    </location>
</feature>
<feature type="mutagenesis site" description="Strongly reduces HDAC activity." evidence="9">
    <original>W</original>
    <variation>A</variation>
    <location>
        <position position="322"/>
    </location>
</feature>
<feature type="mutagenesis site" description="Strongly reduces HDAC activity." evidence="9">
    <original>E</original>
    <variation>A</variation>
    <location>
        <position position="325"/>
    </location>
</feature>
<feature type="mutagenesis site" description="Strongly reduces HDAC activity." evidence="9">
    <original>G</original>
    <variation>A</variation>
    <location>
        <position position="327"/>
    </location>
</feature>
<feature type="mutagenesis site" description="Strongly reduces HDAC activity." evidence="9">
    <original>L</original>
    <variation>A</variation>
    <location>
        <position position="328"/>
    </location>
</feature>
<feature type="mutagenesis site" description="Strongly reduces HDAC activity." evidence="9">
    <original>L</original>
    <variation>A</variation>
    <location>
        <position position="329"/>
    </location>
</feature>
<feature type="mutagenesis site" description="Strongly reduces HDAC activity." evidence="9">
    <original>V</original>
    <variation>A</variation>
    <location>
        <position position="332"/>
    </location>
</feature>
<feature type="mutagenesis site" description="Strongly reduces HDAC activity." evidence="9">
    <original>L</original>
    <variation>A</variation>
    <location>
        <position position="334"/>
    </location>
</feature>
<feature type="mutagenesis site" description="Strongly reduces HDAC activity." evidence="9">
    <original>D</original>
    <variation>A</variation>
    <location>
        <position position="335"/>
    </location>
</feature>
<feature type="mutagenesis site" description="Strongly reduces HDAC activity." evidence="9">
    <original>L</original>
    <variation>A</variation>
    <location>
        <position position="338"/>
    </location>
</feature>
<feature type="mutagenesis site" description="Strongly reduces HDAC activity." evidence="9">
    <original>P</original>
    <variation>A</variation>
    <location>
        <position position="339"/>
    </location>
</feature>
<feature type="strand" evidence="36">
    <location>
        <begin position="21"/>
        <end position="24"/>
    </location>
</feature>
<feature type="helix" evidence="36">
    <location>
        <begin position="29"/>
        <end position="31"/>
    </location>
</feature>
<feature type="helix" evidence="36">
    <location>
        <begin position="43"/>
        <end position="54"/>
    </location>
</feature>
<feature type="helix" evidence="36">
    <location>
        <begin position="57"/>
        <end position="60"/>
    </location>
</feature>
<feature type="strand" evidence="36">
    <location>
        <begin position="61"/>
        <end position="64"/>
    </location>
</feature>
<feature type="helix" evidence="36">
    <location>
        <begin position="71"/>
        <end position="74"/>
    </location>
</feature>
<feature type="turn" evidence="36">
    <location>
        <begin position="75"/>
        <end position="77"/>
    </location>
</feature>
<feature type="helix" evidence="36">
    <location>
        <begin position="80"/>
        <end position="88"/>
    </location>
</feature>
<feature type="turn" evidence="36">
    <location>
        <begin position="91"/>
        <end position="93"/>
    </location>
</feature>
<feature type="helix" evidence="36">
    <location>
        <begin position="94"/>
        <end position="97"/>
    </location>
</feature>
<feature type="helix" evidence="36">
    <location>
        <begin position="98"/>
        <end position="103"/>
    </location>
</feature>
<feature type="strand" evidence="36">
    <location>
        <begin position="107"/>
        <end position="110"/>
    </location>
</feature>
<feature type="helix" evidence="36">
    <location>
        <begin position="116"/>
        <end position="135"/>
    </location>
</feature>
<feature type="strand" evidence="36">
    <location>
        <begin position="140"/>
        <end position="144"/>
    </location>
</feature>
<feature type="strand" evidence="35">
    <location>
        <begin position="154"/>
        <end position="156"/>
    </location>
</feature>
<feature type="turn" evidence="37">
    <location>
        <begin position="158"/>
        <end position="160"/>
    </location>
</feature>
<feature type="strand" evidence="39">
    <location>
        <begin position="161"/>
        <end position="163"/>
    </location>
</feature>
<feature type="helix" evidence="36">
    <location>
        <begin position="165"/>
        <end position="174"/>
    </location>
</feature>
<feature type="strand" evidence="36">
    <location>
        <begin position="180"/>
        <end position="184"/>
    </location>
</feature>
<feature type="strand" evidence="36">
    <location>
        <begin position="186"/>
        <end position="188"/>
    </location>
</feature>
<feature type="helix" evidence="36">
    <location>
        <begin position="191"/>
        <end position="196"/>
    </location>
</feature>
<feature type="turn" evidence="36">
    <location>
        <begin position="197"/>
        <end position="199"/>
    </location>
</feature>
<feature type="strand" evidence="36">
    <location>
        <begin position="201"/>
        <end position="210"/>
    </location>
</feature>
<feature type="strand" evidence="39">
    <location>
        <begin position="212"/>
        <end position="214"/>
    </location>
</feature>
<feature type="helix" evidence="36">
    <location>
        <begin position="227"/>
        <end position="229"/>
    </location>
</feature>
<feature type="strand" evidence="36">
    <location>
        <begin position="233"/>
        <end position="238"/>
    </location>
</feature>
<feature type="helix" evidence="36">
    <location>
        <begin position="244"/>
        <end position="261"/>
    </location>
</feature>
<feature type="strand" evidence="36">
    <location>
        <begin position="267"/>
        <end position="270"/>
    </location>
</feature>
<feature type="helix" evidence="39">
    <location>
        <begin position="273"/>
        <end position="275"/>
    </location>
</feature>
<feature type="strand" evidence="37">
    <location>
        <begin position="276"/>
        <end position="278"/>
    </location>
</feature>
<feature type="helix" evidence="36">
    <location>
        <begin position="288"/>
        <end position="299"/>
    </location>
</feature>
<feature type="strand" evidence="36">
    <location>
        <begin position="305"/>
        <end position="308"/>
    </location>
</feature>
<feature type="helix" evidence="36">
    <location>
        <begin position="315"/>
        <end position="329"/>
    </location>
</feature>
<feature type="strand" evidence="36">
    <location>
        <begin position="345"/>
        <end position="347"/>
    </location>
</feature>
<feature type="turn" evidence="36">
    <location>
        <begin position="348"/>
        <end position="350"/>
    </location>
</feature>
<feature type="helix" evidence="36">
    <location>
        <begin position="366"/>
        <end position="379"/>
    </location>
</feature>
<feature type="turn" evidence="36">
    <location>
        <begin position="380"/>
        <end position="382"/>
    </location>
</feature>
<feature type="helix" evidence="38">
    <location>
        <begin position="405"/>
        <end position="407"/>
    </location>
</feature>